<gene>
    <name evidence="1" type="primary">rplO</name>
    <name type="ordered locus">Cagg_3005</name>
</gene>
<comment type="function">
    <text evidence="1">Binds to the 23S rRNA.</text>
</comment>
<comment type="subunit">
    <text evidence="1">Part of the 50S ribosomal subunit.</text>
</comment>
<comment type="similarity">
    <text evidence="1">Belongs to the universal ribosomal protein uL15 family.</text>
</comment>
<reference key="1">
    <citation type="submission" date="2008-12" db="EMBL/GenBank/DDBJ databases">
        <title>Complete sequence of Chloroflexus aggregans DSM 9485.</title>
        <authorList>
            <consortium name="US DOE Joint Genome Institute"/>
            <person name="Lucas S."/>
            <person name="Copeland A."/>
            <person name="Lapidus A."/>
            <person name="Glavina del Rio T."/>
            <person name="Dalin E."/>
            <person name="Tice H."/>
            <person name="Pitluck S."/>
            <person name="Foster B."/>
            <person name="Larimer F."/>
            <person name="Land M."/>
            <person name="Hauser L."/>
            <person name="Kyrpides N."/>
            <person name="Mikhailova N."/>
            <person name="Bryant D.A."/>
            <person name="Richardson P."/>
        </authorList>
    </citation>
    <scope>NUCLEOTIDE SEQUENCE [LARGE SCALE GENOMIC DNA]</scope>
    <source>
        <strain>MD-66 / DSM 9485</strain>
    </source>
</reference>
<organism>
    <name type="scientific">Chloroflexus aggregans (strain MD-66 / DSM 9485)</name>
    <dbReference type="NCBI Taxonomy" id="326427"/>
    <lineage>
        <taxon>Bacteria</taxon>
        <taxon>Bacillati</taxon>
        <taxon>Chloroflexota</taxon>
        <taxon>Chloroflexia</taxon>
        <taxon>Chloroflexales</taxon>
        <taxon>Chloroflexineae</taxon>
        <taxon>Chloroflexaceae</taxon>
        <taxon>Chloroflexus</taxon>
    </lineage>
</organism>
<proteinExistence type="inferred from homology"/>
<dbReference type="EMBL" id="CP001337">
    <property type="protein sequence ID" value="ACL25865.1"/>
    <property type="molecule type" value="Genomic_DNA"/>
</dbReference>
<dbReference type="RefSeq" id="WP_015941719.1">
    <property type="nucleotide sequence ID" value="NC_011831.1"/>
</dbReference>
<dbReference type="SMR" id="B8G6Q6"/>
<dbReference type="STRING" id="326427.Cagg_3005"/>
<dbReference type="KEGG" id="cag:Cagg_3005"/>
<dbReference type="eggNOG" id="COG0200">
    <property type="taxonomic scope" value="Bacteria"/>
</dbReference>
<dbReference type="HOGENOM" id="CLU_055188_4_2_0"/>
<dbReference type="OrthoDB" id="9810293at2"/>
<dbReference type="Proteomes" id="UP000002508">
    <property type="component" value="Chromosome"/>
</dbReference>
<dbReference type="GO" id="GO:0022625">
    <property type="term" value="C:cytosolic large ribosomal subunit"/>
    <property type="evidence" value="ECO:0007669"/>
    <property type="project" value="TreeGrafter"/>
</dbReference>
<dbReference type="GO" id="GO:0019843">
    <property type="term" value="F:rRNA binding"/>
    <property type="evidence" value="ECO:0007669"/>
    <property type="project" value="UniProtKB-UniRule"/>
</dbReference>
<dbReference type="GO" id="GO:0003735">
    <property type="term" value="F:structural constituent of ribosome"/>
    <property type="evidence" value="ECO:0007669"/>
    <property type="project" value="InterPro"/>
</dbReference>
<dbReference type="GO" id="GO:0006412">
    <property type="term" value="P:translation"/>
    <property type="evidence" value="ECO:0007669"/>
    <property type="project" value="UniProtKB-UniRule"/>
</dbReference>
<dbReference type="FunFam" id="3.100.10.10:FF:000005">
    <property type="entry name" value="50S ribosomal protein L15"/>
    <property type="match status" value="1"/>
</dbReference>
<dbReference type="Gene3D" id="3.100.10.10">
    <property type="match status" value="1"/>
</dbReference>
<dbReference type="HAMAP" id="MF_01341">
    <property type="entry name" value="Ribosomal_uL15"/>
    <property type="match status" value="1"/>
</dbReference>
<dbReference type="InterPro" id="IPR030878">
    <property type="entry name" value="Ribosomal_uL15"/>
</dbReference>
<dbReference type="InterPro" id="IPR021131">
    <property type="entry name" value="Ribosomal_uL15/eL18"/>
</dbReference>
<dbReference type="InterPro" id="IPR036227">
    <property type="entry name" value="Ribosomal_uL15/eL18_sf"/>
</dbReference>
<dbReference type="InterPro" id="IPR005749">
    <property type="entry name" value="Ribosomal_uL15_bac-type"/>
</dbReference>
<dbReference type="InterPro" id="IPR001196">
    <property type="entry name" value="Ribosomal_uL15_CS"/>
</dbReference>
<dbReference type="NCBIfam" id="TIGR01071">
    <property type="entry name" value="rplO_bact"/>
    <property type="match status" value="1"/>
</dbReference>
<dbReference type="PANTHER" id="PTHR12934">
    <property type="entry name" value="50S RIBOSOMAL PROTEIN L15"/>
    <property type="match status" value="1"/>
</dbReference>
<dbReference type="PANTHER" id="PTHR12934:SF11">
    <property type="entry name" value="LARGE RIBOSOMAL SUBUNIT PROTEIN UL15M"/>
    <property type="match status" value="1"/>
</dbReference>
<dbReference type="Pfam" id="PF00828">
    <property type="entry name" value="Ribosomal_L27A"/>
    <property type="match status" value="1"/>
</dbReference>
<dbReference type="SUPFAM" id="SSF52080">
    <property type="entry name" value="Ribosomal proteins L15p and L18e"/>
    <property type="match status" value="1"/>
</dbReference>
<dbReference type="PROSITE" id="PS00475">
    <property type="entry name" value="RIBOSOMAL_L15"/>
    <property type="match status" value="1"/>
</dbReference>
<protein>
    <recommendedName>
        <fullName evidence="1">Large ribosomal subunit protein uL15</fullName>
    </recommendedName>
    <alternativeName>
        <fullName evidence="3">50S ribosomal protein L15</fullName>
    </alternativeName>
</protein>
<name>RL15_CHLAD</name>
<accession>B8G6Q6</accession>
<feature type="chain" id="PRO_1000166282" description="Large ribosomal subunit protein uL15">
    <location>
        <begin position="1"/>
        <end position="170"/>
    </location>
</feature>
<feature type="region of interest" description="Disordered" evidence="2">
    <location>
        <begin position="1"/>
        <end position="50"/>
    </location>
</feature>
<feature type="compositionally biased region" description="Basic and acidic residues" evidence="2">
    <location>
        <begin position="1"/>
        <end position="12"/>
    </location>
</feature>
<feature type="compositionally biased region" description="Basic residues" evidence="2">
    <location>
        <begin position="13"/>
        <end position="26"/>
    </location>
</feature>
<keyword id="KW-0687">Ribonucleoprotein</keyword>
<keyword id="KW-0689">Ribosomal protein</keyword>
<keyword id="KW-0694">RNA-binding</keyword>
<keyword id="KW-0699">rRNA-binding</keyword>
<sequence length="170" mass="19089">MKLHDLRPAEGSHRKRKRIGRGHGSGKVKTGGKGMMGQKARSGPGPYRTFEGGQNRLVKRMPFKRGFTNKFRVEYEVVNVGSLVDWPTELEVTPETLLARRLVRRKKMPVKILGDGELNQPLVIKAHKFSASARQKIEAAGGKAIDLTWIVERHSRSRGPNPSMRNARQS</sequence>
<evidence type="ECO:0000255" key="1">
    <source>
        <dbReference type="HAMAP-Rule" id="MF_01341"/>
    </source>
</evidence>
<evidence type="ECO:0000256" key="2">
    <source>
        <dbReference type="SAM" id="MobiDB-lite"/>
    </source>
</evidence>
<evidence type="ECO:0000305" key="3"/>